<name>TOIPA_ONCMY</name>
<protein>
    <recommendedName>
        <fullName>Toll-interacting protein A</fullName>
    </recommendedName>
    <alternativeName>
        <fullName>Toll-interacting protein 1</fullName>
    </alternativeName>
</protein>
<sequence>MSTTISTQRGQVYIGELPQDFLRITPTQQQQQVQLDAQAAQQLQYGGSLGTVGRLSITVVQAKLAKNYGMTRMDPYCRVRLGYAVYETPTAHNGAKNPRWNKVIQCTVPPGVDSFYLEIFDERAFSMDDRIAWTHVTIPEGLREGSVVDEWYSLSLSGRQGDDKEGMINLVMSYANMPAGMHMSPPVVLMPTVYQQGVGYVPIAGVPTVYNQGMVPMGMPAAPTVAPQEAPCSEEDLKALQDMFPNLDKEVIRTVIEAQQGNKDAAINSLLQMTEEL</sequence>
<comment type="function">
    <text evidence="1">Component of the signaling pathway of IL-1 and Toll-like receptors. Inhibits cell activation by microbial products. Connects the ubiquitin pathway to autophagy by functioning as a ubiquitin-ATG8 family adapter and thus mediating autophagic clearance of ubiquitin conjugates. The TOLLIP-dependent selective autophagy pathway plays an important role in clearance of cytotoxic polyQ proteins aggregates (By similarity).</text>
</comment>
<comment type="subunit">
    <text evidence="1">Interacts with ATG8 family proteins (via AIM motifs), and ubiquitin (via CUE domain).</text>
</comment>
<comment type="subcellular location">
    <subcellularLocation>
        <location evidence="5">Cytoplasm</location>
    </subcellularLocation>
</comment>
<comment type="tissue specificity">
    <text evidence="4">Ubiquitous.</text>
</comment>
<comment type="domain">
    <text evidence="1">Both ATG8-interaction motifs (AIM1 and AIM2) are required for the association with ATG8 family proteins.</text>
</comment>
<comment type="similarity">
    <text evidence="5">Belongs to the tollip family.</text>
</comment>
<gene>
    <name type="primary">tollipa</name>
    <name type="synonym">tollip1</name>
</gene>
<evidence type="ECO:0000250" key="1"/>
<evidence type="ECO:0000255" key="2">
    <source>
        <dbReference type="PROSITE-ProRule" id="PRU00041"/>
    </source>
</evidence>
<evidence type="ECO:0000255" key="3">
    <source>
        <dbReference type="PROSITE-ProRule" id="PRU00468"/>
    </source>
</evidence>
<evidence type="ECO:0000269" key="4">
    <source>
    </source>
</evidence>
<evidence type="ECO:0000305" key="5"/>
<accession>Q4LBC8</accession>
<organism>
    <name type="scientific">Oncorhynchus mykiss</name>
    <name type="common">Rainbow trout</name>
    <name type="synonym">Salmo gairdneri</name>
    <dbReference type="NCBI Taxonomy" id="8022"/>
    <lineage>
        <taxon>Eukaryota</taxon>
        <taxon>Metazoa</taxon>
        <taxon>Chordata</taxon>
        <taxon>Craniata</taxon>
        <taxon>Vertebrata</taxon>
        <taxon>Euteleostomi</taxon>
        <taxon>Actinopterygii</taxon>
        <taxon>Neopterygii</taxon>
        <taxon>Teleostei</taxon>
        <taxon>Protacanthopterygii</taxon>
        <taxon>Salmoniformes</taxon>
        <taxon>Salmonidae</taxon>
        <taxon>Salmoninae</taxon>
        <taxon>Oncorhynchus</taxon>
    </lineage>
</organism>
<dbReference type="EMBL" id="AJ878916">
    <property type="protein sequence ID" value="CAI48085.1"/>
    <property type="molecule type" value="mRNA"/>
</dbReference>
<dbReference type="RefSeq" id="NP_001117892.1">
    <property type="nucleotide sequence ID" value="NM_001124420.1"/>
</dbReference>
<dbReference type="SMR" id="Q4LBC8"/>
<dbReference type="GeneID" id="100136122"/>
<dbReference type="KEGG" id="omy:100136122"/>
<dbReference type="OrthoDB" id="9942608at2759"/>
<dbReference type="Proteomes" id="UP000694395">
    <property type="component" value="Unplaced"/>
</dbReference>
<dbReference type="GO" id="GO:0005737">
    <property type="term" value="C:cytoplasm"/>
    <property type="evidence" value="ECO:0007669"/>
    <property type="project" value="UniProtKB-SubCell"/>
</dbReference>
<dbReference type="GO" id="GO:0043130">
    <property type="term" value="F:ubiquitin binding"/>
    <property type="evidence" value="ECO:0007669"/>
    <property type="project" value="InterPro"/>
</dbReference>
<dbReference type="GO" id="GO:0031624">
    <property type="term" value="F:ubiquitin conjugating enzyme binding"/>
    <property type="evidence" value="ECO:0007669"/>
    <property type="project" value="TreeGrafter"/>
</dbReference>
<dbReference type="GO" id="GO:0006914">
    <property type="term" value="P:autophagy"/>
    <property type="evidence" value="ECO:0007669"/>
    <property type="project" value="UniProtKB-KW"/>
</dbReference>
<dbReference type="GO" id="GO:0006954">
    <property type="term" value="P:inflammatory response"/>
    <property type="evidence" value="ECO:0007669"/>
    <property type="project" value="UniProtKB-KW"/>
</dbReference>
<dbReference type="GO" id="GO:0045087">
    <property type="term" value="P:innate immune response"/>
    <property type="evidence" value="ECO:0007669"/>
    <property type="project" value="UniProtKB-KW"/>
</dbReference>
<dbReference type="GO" id="GO:0016310">
    <property type="term" value="P:phosphorylation"/>
    <property type="evidence" value="ECO:0000250"/>
    <property type="project" value="UniProtKB"/>
</dbReference>
<dbReference type="GO" id="GO:0006511">
    <property type="term" value="P:ubiquitin-dependent protein catabolic process"/>
    <property type="evidence" value="ECO:0007669"/>
    <property type="project" value="TreeGrafter"/>
</dbReference>
<dbReference type="CDD" id="cd04016">
    <property type="entry name" value="C2_Tollip"/>
    <property type="match status" value="1"/>
</dbReference>
<dbReference type="CDD" id="cd14363">
    <property type="entry name" value="CUE_TOLIP"/>
    <property type="match status" value="1"/>
</dbReference>
<dbReference type="FunFam" id="1.10.8.10:FF:000036">
    <property type="entry name" value="Toll-interacting protein-like Protein"/>
    <property type="match status" value="1"/>
</dbReference>
<dbReference type="FunFam" id="2.60.40.150:FF:000055">
    <property type="entry name" value="Toll-interacting protein-like Protein"/>
    <property type="match status" value="1"/>
</dbReference>
<dbReference type="Gene3D" id="2.60.40.150">
    <property type="entry name" value="C2 domain"/>
    <property type="match status" value="1"/>
</dbReference>
<dbReference type="Gene3D" id="1.10.8.10">
    <property type="entry name" value="DNA helicase RuvA subunit, C-terminal domain"/>
    <property type="match status" value="1"/>
</dbReference>
<dbReference type="InterPro" id="IPR000008">
    <property type="entry name" value="C2_dom"/>
</dbReference>
<dbReference type="InterPro" id="IPR035892">
    <property type="entry name" value="C2_domain_sf"/>
</dbReference>
<dbReference type="InterPro" id="IPR003892">
    <property type="entry name" value="CUE"/>
</dbReference>
<dbReference type="InterPro" id="IPR041799">
    <property type="entry name" value="TOLIP_CUE"/>
</dbReference>
<dbReference type="InterPro" id="IPR037301">
    <property type="entry name" value="Tollip_C2"/>
</dbReference>
<dbReference type="InterPro" id="IPR009060">
    <property type="entry name" value="UBA-like_sf"/>
</dbReference>
<dbReference type="PANTHER" id="PTHR16461">
    <property type="entry name" value="TOLL-INTERACTING PROTEIN"/>
    <property type="match status" value="1"/>
</dbReference>
<dbReference type="PANTHER" id="PTHR16461:SF5">
    <property type="entry name" value="TOLL-INTERACTING PROTEIN"/>
    <property type="match status" value="1"/>
</dbReference>
<dbReference type="Pfam" id="PF00168">
    <property type="entry name" value="C2"/>
    <property type="match status" value="1"/>
</dbReference>
<dbReference type="Pfam" id="PF02845">
    <property type="entry name" value="CUE"/>
    <property type="match status" value="1"/>
</dbReference>
<dbReference type="SMART" id="SM00239">
    <property type="entry name" value="C2"/>
    <property type="match status" value="1"/>
</dbReference>
<dbReference type="SMART" id="SM00546">
    <property type="entry name" value="CUE"/>
    <property type="match status" value="1"/>
</dbReference>
<dbReference type="SUPFAM" id="SSF49562">
    <property type="entry name" value="C2 domain (Calcium/lipid-binding domain, CaLB)"/>
    <property type="match status" value="1"/>
</dbReference>
<dbReference type="SUPFAM" id="SSF46934">
    <property type="entry name" value="UBA-like"/>
    <property type="match status" value="1"/>
</dbReference>
<dbReference type="PROSITE" id="PS50004">
    <property type="entry name" value="C2"/>
    <property type="match status" value="1"/>
</dbReference>
<dbReference type="PROSITE" id="PS51140">
    <property type="entry name" value="CUE"/>
    <property type="match status" value="1"/>
</dbReference>
<reference key="1">
    <citation type="journal article" date="2008" name="Fish Shellfish Immunol.">
        <title>Tollip, a negative regulator of TLR-signalling, is encoded by twin genes in salmonid fish.</title>
        <authorList>
            <person name="Rebl A."/>
            <person name="Hoyheim B."/>
            <person name="Fischer U."/>
            <person name="Kollner B."/>
            <person name="Siegl E."/>
            <person name="Seyfert H.M."/>
        </authorList>
    </citation>
    <scope>NUCLEOTIDE SEQUENCE [MRNA]</scope>
    <scope>TISSUE SPECIFICITY</scope>
    <source>
        <tissue>Liver</tissue>
    </source>
</reference>
<keyword id="KW-0072">Autophagy</keyword>
<keyword id="KW-0963">Cytoplasm</keyword>
<keyword id="KW-0391">Immunity</keyword>
<keyword id="KW-0395">Inflammatory response</keyword>
<keyword id="KW-0399">Innate immunity</keyword>
<keyword id="KW-0677">Repeat</keyword>
<feature type="chain" id="PRO_0000384936" description="Toll-interacting protein A">
    <location>
        <begin position="1"/>
        <end position="277"/>
    </location>
</feature>
<feature type="domain" description="C2" evidence="2">
    <location>
        <begin position="35"/>
        <end position="152"/>
    </location>
</feature>
<feature type="domain" description="CUE" evidence="3">
    <location>
        <begin position="232"/>
        <end position="275"/>
    </location>
</feature>
<feature type="short sequence motif" description="AIM1">
    <location>
        <begin position="133"/>
        <end position="136"/>
    </location>
</feature>
<feature type="short sequence motif" description="AIM2">
    <location>
        <begin position="151"/>
        <end position="154"/>
    </location>
</feature>
<proteinExistence type="evidence at transcript level"/>